<comment type="function">
    <text evidence="2">Binds as a heterodimer with protein bS6 to the central domain of the 16S rRNA, where it helps stabilize the platform of the 30S subunit.</text>
</comment>
<comment type="subunit">
    <text evidence="2">Part of the 30S ribosomal subunit. Forms a tight heterodimer with protein bS6.</text>
</comment>
<comment type="similarity">
    <text evidence="3">Belongs to the bacterial ribosomal protein bS18 family.</text>
</comment>
<gene>
    <name type="primary">rpsR</name>
    <name type="ordered locus">Z5811</name>
    <name type="ordered locus">ECs5178</name>
</gene>
<reference key="1">
    <citation type="journal article" date="2001" name="Nature">
        <title>Genome sequence of enterohaemorrhagic Escherichia coli O157:H7.</title>
        <authorList>
            <person name="Perna N.T."/>
            <person name="Plunkett G. III"/>
            <person name="Burland V."/>
            <person name="Mau B."/>
            <person name="Glasner J.D."/>
            <person name="Rose D.J."/>
            <person name="Mayhew G.F."/>
            <person name="Evans P.S."/>
            <person name="Gregor J."/>
            <person name="Kirkpatrick H.A."/>
            <person name="Posfai G."/>
            <person name="Hackett J."/>
            <person name="Klink S."/>
            <person name="Boutin A."/>
            <person name="Shao Y."/>
            <person name="Miller L."/>
            <person name="Grotbeck E.J."/>
            <person name="Davis N.W."/>
            <person name="Lim A."/>
            <person name="Dimalanta E.T."/>
            <person name="Potamousis K."/>
            <person name="Apodaca J."/>
            <person name="Anantharaman T.S."/>
            <person name="Lin J."/>
            <person name="Yen G."/>
            <person name="Schwartz D.C."/>
            <person name="Welch R.A."/>
            <person name="Blattner F.R."/>
        </authorList>
    </citation>
    <scope>NUCLEOTIDE SEQUENCE [LARGE SCALE GENOMIC DNA]</scope>
    <source>
        <strain>O157:H7 / EDL933 / ATCC 700927 / EHEC</strain>
    </source>
</reference>
<reference key="2">
    <citation type="journal article" date="2001" name="DNA Res.">
        <title>Complete genome sequence of enterohemorrhagic Escherichia coli O157:H7 and genomic comparison with a laboratory strain K-12.</title>
        <authorList>
            <person name="Hayashi T."/>
            <person name="Makino K."/>
            <person name="Ohnishi M."/>
            <person name="Kurokawa K."/>
            <person name="Ishii K."/>
            <person name="Yokoyama K."/>
            <person name="Han C.-G."/>
            <person name="Ohtsubo E."/>
            <person name="Nakayama K."/>
            <person name="Murata T."/>
            <person name="Tanaka M."/>
            <person name="Tobe T."/>
            <person name="Iida T."/>
            <person name="Takami H."/>
            <person name="Honda T."/>
            <person name="Sasakawa C."/>
            <person name="Ogasawara N."/>
            <person name="Yasunaga T."/>
            <person name="Kuhara S."/>
            <person name="Shiba T."/>
            <person name="Hattori M."/>
            <person name="Shinagawa H."/>
        </authorList>
    </citation>
    <scope>NUCLEOTIDE SEQUENCE [LARGE SCALE GENOMIC DNA]</scope>
    <source>
        <strain>O157:H7 / Sakai / RIMD 0509952 / EHEC</strain>
    </source>
</reference>
<protein>
    <recommendedName>
        <fullName evidence="3">Small ribosomal subunit protein bS18</fullName>
    </recommendedName>
    <alternativeName>
        <fullName>30S ribosomal protein S18</fullName>
    </alternativeName>
</protein>
<keyword id="KW-0007">Acetylation</keyword>
<keyword id="KW-1185">Reference proteome</keyword>
<keyword id="KW-0687">Ribonucleoprotein</keyword>
<keyword id="KW-0689">Ribosomal protein</keyword>
<keyword id="KW-0694">RNA-binding</keyword>
<keyword id="KW-0699">rRNA-binding</keyword>
<organism>
    <name type="scientific">Escherichia coli O157:H7</name>
    <dbReference type="NCBI Taxonomy" id="83334"/>
    <lineage>
        <taxon>Bacteria</taxon>
        <taxon>Pseudomonadati</taxon>
        <taxon>Pseudomonadota</taxon>
        <taxon>Gammaproteobacteria</taxon>
        <taxon>Enterobacterales</taxon>
        <taxon>Enterobacteriaceae</taxon>
        <taxon>Escherichia</taxon>
    </lineage>
</organism>
<feature type="initiator methionine" description="Removed" evidence="1">
    <location>
        <position position="1"/>
    </location>
</feature>
<feature type="chain" id="PRO_0000111155" description="Small ribosomal subunit protein bS18">
    <location>
        <begin position="2"/>
        <end position="75"/>
    </location>
</feature>
<feature type="modified residue" description="N-acetylalanine" evidence="1">
    <location>
        <position position="2"/>
    </location>
</feature>
<feature type="sequence conflict" description="In Ref. 1." evidence="3" ref="1">
    <original>E</original>
    <variation>Q</variation>
    <location>
        <position position="16"/>
    </location>
</feature>
<name>RS18_ECO57</name>
<sequence>MARYFRRRKFCRFTAEGVQEIDYKDIATLKNYITESGKIVPSRITGTRAKYQRQLARAIKRARYLSLLPYTDRHQ</sequence>
<proteinExistence type="inferred from homology"/>
<dbReference type="EMBL" id="AE005174">
    <property type="protein sequence ID" value="AAG59398.1"/>
    <property type="molecule type" value="Genomic_DNA"/>
</dbReference>
<dbReference type="EMBL" id="BA000007">
    <property type="protein sequence ID" value="BAB38601.1"/>
    <property type="molecule type" value="Genomic_DNA"/>
</dbReference>
<dbReference type="PIR" id="B86117">
    <property type="entry name" value="B86117"/>
</dbReference>
<dbReference type="PIR" id="B91276">
    <property type="entry name" value="B91276"/>
</dbReference>
<dbReference type="RefSeq" id="NP_313205.1">
    <property type="nucleotide sequence ID" value="NC_002695.1"/>
</dbReference>
<dbReference type="RefSeq" id="WP_000135199.1">
    <property type="nucleotide sequence ID" value="NZ_VOAI01000008.1"/>
</dbReference>
<dbReference type="EMDB" id="EMD-43930"/>
<dbReference type="SMR" id="P0A7T9"/>
<dbReference type="STRING" id="155864.Z5811"/>
<dbReference type="GeneID" id="913982"/>
<dbReference type="GeneID" id="98186237"/>
<dbReference type="KEGG" id="ece:Z5811"/>
<dbReference type="KEGG" id="ecs:ECs_5178"/>
<dbReference type="PATRIC" id="fig|386585.9.peg.5412"/>
<dbReference type="eggNOG" id="COG0238">
    <property type="taxonomic scope" value="Bacteria"/>
</dbReference>
<dbReference type="HOGENOM" id="CLU_148710_2_3_6"/>
<dbReference type="OMA" id="QKKYCRF"/>
<dbReference type="Proteomes" id="UP000000558">
    <property type="component" value="Chromosome"/>
</dbReference>
<dbReference type="Proteomes" id="UP000002519">
    <property type="component" value="Chromosome"/>
</dbReference>
<dbReference type="GO" id="GO:0022627">
    <property type="term" value="C:cytosolic small ribosomal subunit"/>
    <property type="evidence" value="ECO:0007669"/>
    <property type="project" value="TreeGrafter"/>
</dbReference>
<dbReference type="GO" id="GO:0070181">
    <property type="term" value="F:small ribosomal subunit rRNA binding"/>
    <property type="evidence" value="ECO:0007669"/>
    <property type="project" value="TreeGrafter"/>
</dbReference>
<dbReference type="GO" id="GO:0003735">
    <property type="term" value="F:structural constituent of ribosome"/>
    <property type="evidence" value="ECO:0007669"/>
    <property type="project" value="InterPro"/>
</dbReference>
<dbReference type="GO" id="GO:0006412">
    <property type="term" value="P:translation"/>
    <property type="evidence" value="ECO:0007669"/>
    <property type="project" value="UniProtKB-UniRule"/>
</dbReference>
<dbReference type="FunFam" id="4.10.640.10:FF:000001">
    <property type="entry name" value="30S ribosomal protein S18"/>
    <property type="match status" value="1"/>
</dbReference>
<dbReference type="Gene3D" id="4.10.640.10">
    <property type="entry name" value="Ribosomal protein S18"/>
    <property type="match status" value="1"/>
</dbReference>
<dbReference type="HAMAP" id="MF_00270">
    <property type="entry name" value="Ribosomal_bS18"/>
    <property type="match status" value="1"/>
</dbReference>
<dbReference type="InterPro" id="IPR001648">
    <property type="entry name" value="Ribosomal_bS18"/>
</dbReference>
<dbReference type="InterPro" id="IPR018275">
    <property type="entry name" value="Ribosomal_bS18_CS"/>
</dbReference>
<dbReference type="InterPro" id="IPR036870">
    <property type="entry name" value="Ribosomal_bS18_sf"/>
</dbReference>
<dbReference type="NCBIfam" id="TIGR00165">
    <property type="entry name" value="S18"/>
    <property type="match status" value="1"/>
</dbReference>
<dbReference type="PANTHER" id="PTHR13479">
    <property type="entry name" value="30S RIBOSOMAL PROTEIN S18"/>
    <property type="match status" value="1"/>
</dbReference>
<dbReference type="PANTHER" id="PTHR13479:SF40">
    <property type="entry name" value="SMALL RIBOSOMAL SUBUNIT PROTEIN BS18M"/>
    <property type="match status" value="1"/>
</dbReference>
<dbReference type="Pfam" id="PF01084">
    <property type="entry name" value="Ribosomal_S18"/>
    <property type="match status" value="1"/>
</dbReference>
<dbReference type="PRINTS" id="PR00974">
    <property type="entry name" value="RIBOSOMALS18"/>
</dbReference>
<dbReference type="SUPFAM" id="SSF46911">
    <property type="entry name" value="Ribosomal protein S18"/>
    <property type="match status" value="1"/>
</dbReference>
<dbReference type="PROSITE" id="PS00057">
    <property type="entry name" value="RIBOSOMAL_S18"/>
    <property type="match status" value="1"/>
</dbReference>
<evidence type="ECO:0000250" key="1"/>
<evidence type="ECO:0000255" key="2">
    <source>
        <dbReference type="HAMAP-Rule" id="MF_00270"/>
    </source>
</evidence>
<evidence type="ECO:0000305" key="3"/>
<accession>P0A7T9</accession>
<accession>P02374</accession>